<comment type="function">
    <text evidence="3">Prospore-specific dityrosine transporter responsible for translocation of dityrosine through the prospore membrane and required for the formation of the outermost layer of the spore.</text>
</comment>
<comment type="subcellular location">
    <subcellularLocation>
        <location evidence="3 4 5 6 7">Prospore membrane</location>
        <topology evidence="3 4 5 6 7">Multi-pass membrane protein</topology>
    </subcellularLocation>
</comment>
<comment type="induction">
    <text evidence="3">During sporulation.</text>
</comment>
<comment type="PTM">
    <text evidence="7">Phosphorylated.</text>
</comment>
<comment type="similarity">
    <text evidence="8">Belongs to the major facilitator superfamily. CAR1 family.</text>
</comment>
<dbReference type="EMBL" id="Z36049">
    <property type="protein sequence ID" value="CAA85141.1"/>
    <property type="molecule type" value="Genomic_DNA"/>
</dbReference>
<dbReference type="EMBL" id="BK006936">
    <property type="protein sequence ID" value="DAA07294.1"/>
    <property type="molecule type" value="Genomic_DNA"/>
</dbReference>
<dbReference type="PIR" id="S46051">
    <property type="entry name" value="S46051"/>
</dbReference>
<dbReference type="RefSeq" id="NP_009739.1">
    <property type="nucleotide sequence ID" value="NM_001178528.1"/>
</dbReference>
<dbReference type="BioGRID" id="32878">
    <property type="interactions" value="51"/>
</dbReference>
<dbReference type="DIP" id="DIP-5179N"/>
<dbReference type="FunCoup" id="P38125">
    <property type="interactions" value="48"/>
</dbReference>
<dbReference type="IntAct" id="P38125">
    <property type="interactions" value="4"/>
</dbReference>
<dbReference type="MINT" id="P38125"/>
<dbReference type="STRING" id="4932.YBR180W"/>
<dbReference type="TCDB" id="2.A.1.2.40">
    <property type="family name" value="the major facilitator superfamily (mfs)"/>
</dbReference>
<dbReference type="PaxDb" id="4932-YBR180W"/>
<dbReference type="PeptideAtlas" id="P38125"/>
<dbReference type="EnsemblFungi" id="YBR180W_mRNA">
    <property type="protein sequence ID" value="YBR180W"/>
    <property type="gene ID" value="YBR180W"/>
</dbReference>
<dbReference type="GeneID" id="852478"/>
<dbReference type="KEGG" id="sce:YBR180W"/>
<dbReference type="AGR" id="SGD:S000000384"/>
<dbReference type="SGD" id="S000000384">
    <property type="gene designation" value="DTR1"/>
</dbReference>
<dbReference type="VEuPathDB" id="FungiDB:YBR180W"/>
<dbReference type="eggNOG" id="KOG0255">
    <property type="taxonomic scope" value="Eukaryota"/>
</dbReference>
<dbReference type="HOGENOM" id="CLU_008455_8_7_1"/>
<dbReference type="InParanoid" id="P38125"/>
<dbReference type="OMA" id="FQAFGSC"/>
<dbReference type="OrthoDB" id="3066029at2759"/>
<dbReference type="BioCyc" id="YEAST:G3O-29124-MONOMER"/>
<dbReference type="BioGRID-ORCS" id="852478">
    <property type="hits" value="0 hits in 10 CRISPR screens"/>
</dbReference>
<dbReference type="PRO" id="PR:P38125"/>
<dbReference type="Proteomes" id="UP000002311">
    <property type="component" value="Chromosome II"/>
</dbReference>
<dbReference type="RNAct" id="P38125">
    <property type="molecule type" value="protein"/>
</dbReference>
<dbReference type="GO" id="GO:0071944">
    <property type="term" value="C:cell periphery"/>
    <property type="evidence" value="ECO:0007005"/>
    <property type="project" value="SGD"/>
</dbReference>
<dbReference type="GO" id="GO:0005886">
    <property type="term" value="C:plasma membrane"/>
    <property type="evidence" value="ECO:0000318"/>
    <property type="project" value="GO_Central"/>
</dbReference>
<dbReference type="GO" id="GO:0005628">
    <property type="term" value="C:prospore membrane"/>
    <property type="evidence" value="ECO:0000314"/>
    <property type="project" value="SGD"/>
</dbReference>
<dbReference type="GO" id="GO:0005275">
    <property type="term" value="F:amine transmembrane transporter activity"/>
    <property type="evidence" value="ECO:0000315"/>
    <property type="project" value="SGD"/>
</dbReference>
<dbReference type="GO" id="GO:0015837">
    <property type="term" value="P:amine transport"/>
    <property type="evidence" value="ECO:0000315"/>
    <property type="project" value="SGD"/>
</dbReference>
<dbReference type="GO" id="GO:0030476">
    <property type="term" value="P:ascospore wall assembly"/>
    <property type="evidence" value="ECO:0000315"/>
    <property type="project" value="SGD"/>
</dbReference>
<dbReference type="GO" id="GO:0055085">
    <property type="term" value="P:transmembrane transport"/>
    <property type="evidence" value="ECO:0000315"/>
    <property type="project" value="SGD"/>
</dbReference>
<dbReference type="CDD" id="cd17323">
    <property type="entry name" value="MFS_Tpo1_MDR_like"/>
    <property type="match status" value="1"/>
</dbReference>
<dbReference type="Gene3D" id="1.20.1250.20">
    <property type="entry name" value="MFS general substrate transporter like domains"/>
    <property type="match status" value="1"/>
</dbReference>
<dbReference type="InterPro" id="IPR011701">
    <property type="entry name" value="MFS"/>
</dbReference>
<dbReference type="InterPro" id="IPR020846">
    <property type="entry name" value="MFS_dom"/>
</dbReference>
<dbReference type="InterPro" id="IPR036259">
    <property type="entry name" value="MFS_trans_sf"/>
</dbReference>
<dbReference type="PANTHER" id="PTHR23502:SF21">
    <property type="entry name" value="DITYROSINE TRANSPORTER 1"/>
    <property type="match status" value="1"/>
</dbReference>
<dbReference type="PANTHER" id="PTHR23502">
    <property type="entry name" value="MAJOR FACILITATOR SUPERFAMILY"/>
    <property type="match status" value="1"/>
</dbReference>
<dbReference type="Pfam" id="PF07690">
    <property type="entry name" value="MFS_1"/>
    <property type="match status" value="1"/>
</dbReference>
<dbReference type="SUPFAM" id="SSF103473">
    <property type="entry name" value="MFS general substrate transporter"/>
    <property type="match status" value="1"/>
</dbReference>
<dbReference type="PROSITE" id="PS50850">
    <property type="entry name" value="MFS"/>
    <property type="match status" value="1"/>
</dbReference>
<keyword id="KW-0472">Membrane</keyword>
<keyword id="KW-0597">Phosphoprotein</keyword>
<keyword id="KW-1185">Reference proteome</keyword>
<keyword id="KW-0749">Sporulation</keyword>
<keyword id="KW-0812">Transmembrane</keyword>
<keyword id="KW-1133">Transmembrane helix</keyword>
<keyword id="KW-0813">Transport</keyword>
<name>DTR1_YEAST</name>
<sequence length="572" mass="63407">MGSEPFQKKNLGLQINSQESGTTRSTFHSLEDLGDDVINESWDQVNQKRANIDHDVFHEHPDSSPSLSAQKAKTKEEEVAVKSSNSQSRDPSPDTQAHIPYTYFSKDQRLIIFGIIIFIGFLGPMSGNIYIPALPLLQREYDVSATTINATVSVFMAVFSVGPLFWGALADFGGRKFLYMVSLSLMLIVNILLAAVPVNIAALFVLRIFQAFASSSVISLGAGTVTDVVPPKHRGKAIAYFMMGPNMGPIIAPIVAGLILMKGNYWRWLFGFTSIMTGIALILVTALLPETLRCIVGNGDPKWGDKKDERENNESPFFEGNKISHRRLFPDIGIRKPVNNDAFFQENFPKPPKAGLTLYWKMIKCPPIIITSVSTALLFSSYYAFSVTFSYYLEHDYRFTMLEIGAAYVCPGVAMLLGSQSGGHLSDYLRSRWIKSHPKKKFPAEFRLLLNLIGILLTICGTIGYGWAIFFHYHFVVLLVFSALTAFGMTWCSNTSMTYLTELFPKRAAGTVAVSSFFRNVGAAISSAIILQLCNAMGIGWCFTGLGLCSSISLIGILYLLIFQRKYTAKEF</sequence>
<organism>
    <name type="scientific">Saccharomyces cerevisiae (strain ATCC 204508 / S288c)</name>
    <name type="common">Baker's yeast</name>
    <dbReference type="NCBI Taxonomy" id="559292"/>
    <lineage>
        <taxon>Eukaryota</taxon>
        <taxon>Fungi</taxon>
        <taxon>Dikarya</taxon>
        <taxon>Ascomycota</taxon>
        <taxon>Saccharomycotina</taxon>
        <taxon>Saccharomycetes</taxon>
        <taxon>Saccharomycetales</taxon>
        <taxon>Saccharomycetaceae</taxon>
        <taxon>Saccharomyces</taxon>
    </lineage>
</organism>
<gene>
    <name type="primary">DTR1</name>
    <name type="ordered locus">YBR180W</name>
    <name type="ORF">YBR1242</name>
</gene>
<accession>P38125</accession>
<accession>D6VQH4</accession>
<evidence type="ECO:0000255" key="1"/>
<evidence type="ECO:0000256" key="2">
    <source>
        <dbReference type="SAM" id="MobiDB-lite"/>
    </source>
</evidence>
<evidence type="ECO:0000269" key="3">
    <source>
    </source>
</evidence>
<evidence type="ECO:0000269" key="4">
    <source>
    </source>
</evidence>
<evidence type="ECO:0000269" key="5">
    <source>
    </source>
</evidence>
<evidence type="ECO:0000269" key="6">
    <source>
    </source>
</evidence>
<evidence type="ECO:0000269" key="7">
    <source>
    </source>
</evidence>
<evidence type="ECO:0000305" key="8"/>
<feature type="chain" id="PRO_0000173438" description="Dityrosine transporter 1">
    <location>
        <begin position="1"/>
        <end position="572"/>
    </location>
</feature>
<feature type="topological domain" description="Cytoplasmic" evidence="1">
    <location>
        <begin position="1"/>
        <end position="110"/>
    </location>
</feature>
<feature type="transmembrane region" description="Helical" evidence="1">
    <location>
        <begin position="111"/>
        <end position="131"/>
    </location>
</feature>
<feature type="topological domain" description="Extracellular" evidence="1">
    <location>
        <begin position="132"/>
        <end position="149"/>
    </location>
</feature>
<feature type="transmembrane region" description="Helical" evidence="1">
    <location>
        <begin position="150"/>
        <end position="170"/>
    </location>
</feature>
<feature type="topological domain" description="Cytoplasmic" evidence="1">
    <location>
        <begin position="171"/>
        <end position="184"/>
    </location>
</feature>
<feature type="transmembrane region" description="Helical" evidence="1">
    <location>
        <begin position="185"/>
        <end position="205"/>
    </location>
</feature>
<feature type="topological domain" description="Extracellular" evidence="1">
    <location>
        <begin position="206"/>
        <end position="207"/>
    </location>
</feature>
<feature type="transmembrane region" description="Helical" evidence="1">
    <location>
        <begin position="208"/>
        <end position="228"/>
    </location>
</feature>
<feature type="topological domain" description="Cytoplasmic" evidence="1">
    <location>
        <begin position="229"/>
        <end position="240"/>
    </location>
</feature>
<feature type="transmembrane region" description="Helical" evidence="1">
    <location>
        <begin position="241"/>
        <end position="261"/>
    </location>
</feature>
<feature type="topological domain" description="Extracellular" evidence="1">
    <location>
        <begin position="262"/>
        <end position="267"/>
    </location>
</feature>
<feature type="transmembrane region" description="Helical" evidence="1">
    <location>
        <begin position="268"/>
        <end position="288"/>
    </location>
</feature>
<feature type="topological domain" description="Cytoplasmic" evidence="1">
    <location>
        <begin position="289"/>
        <end position="366"/>
    </location>
</feature>
<feature type="transmembrane region" description="Helical" evidence="1">
    <location>
        <begin position="367"/>
        <end position="387"/>
    </location>
</feature>
<feature type="topological domain" description="Extracellular" evidence="1">
    <location>
        <begin position="388"/>
        <end position="398"/>
    </location>
</feature>
<feature type="transmembrane region" description="Helical" evidence="1">
    <location>
        <begin position="399"/>
        <end position="419"/>
    </location>
</feature>
<feature type="topological domain" description="Cytoplasmic" evidence="1">
    <location>
        <begin position="420"/>
        <end position="446"/>
    </location>
</feature>
<feature type="transmembrane region" description="Helical" evidence="1">
    <location>
        <begin position="447"/>
        <end position="469"/>
    </location>
</feature>
<feature type="topological domain" description="Extracellular" evidence="1">
    <location>
        <begin position="470"/>
        <end position="472"/>
    </location>
</feature>
<feature type="transmembrane region" description="Helical" evidence="1">
    <location>
        <begin position="473"/>
        <end position="493"/>
    </location>
</feature>
<feature type="topological domain" description="Cytoplasmic" evidence="1">
    <location>
        <begin position="494"/>
        <end position="520"/>
    </location>
</feature>
<feature type="transmembrane region" description="Helical" evidence="1">
    <location>
        <begin position="521"/>
        <end position="541"/>
    </location>
</feature>
<feature type="topological domain" description="Extracellular" evidence="1">
    <location>
        <position position="542"/>
    </location>
</feature>
<feature type="transmembrane region" description="Helical" evidence="1">
    <location>
        <begin position="543"/>
        <end position="563"/>
    </location>
</feature>
<feature type="topological domain" description="Cytoplasmic" evidence="1">
    <location>
        <begin position="564"/>
        <end position="572"/>
    </location>
</feature>
<feature type="region of interest" description="Disordered" evidence="2">
    <location>
        <begin position="1"/>
        <end position="28"/>
    </location>
</feature>
<feature type="region of interest" description="Disordered" evidence="2">
    <location>
        <begin position="49"/>
        <end position="95"/>
    </location>
</feature>
<feature type="region of interest" description="Required for the localization to the prospore membrane">
    <location>
        <begin position="548"/>
        <end position="572"/>
    </location>
</feature>
<feature type="compositionally biased region" description="Polar residues" evidence="2">
    <location>
        <begin position="13"/>
        <end position="28"/>
    </location>
</feature>
<feature type="compositionally biased region" description="Basic and acidic residues" evidence="2">
    <location>
        <begin position="50"/>
        <end position="62"/>
    </location>
</feature>
<feature type="compositionally biased region" description="Polar residues" evidence="2">
    <location>
        <begin position="83"/>
        <end position="95"/>
    </location>
</feature>
<protein>
    <recommendedName>
        <fullName>Dityrosine transporter 1</fullName>
    </recommendedName>
</protein>
<proteinExistence type="evidence at protein level"/>
<reference key="1">
    <citation type="journal article" date="1994" name="EMBO J.">
        <title>Complete DNA sequence of yeast chromosome II.</title>
        <authorList>
            <person name="Feldmann H."/>
            <person name="Aigle M."/>
            <person name="Aljinovic G."/>
            <person name="Andre B."/>
            <person name="Baclet M.C."/>
            <person name="Barthe C."/>
            <person name="Baur A."/>
            <person name="Becam A.-M."/>
            <person name="Biteau N."/>
            <person name="Boles E."/>
            <person name="Brandt T."/>
            <person name="Brendel M."/>
            <person name="Brueckner M."/>
            <person name="Bussereau F."/>
            <person name="Christiansen C."/>
            <person name="Contreras R."/>
            <person name="Crouzet M."/>
            <person name="Cziepluch C."/>
            <person name="Demolis N."/>
            <person name="Delaveau T."/>
            <person name="Doignon F."/>
            <person name="Domdey H."/>
            <person name="Duesterhus S."/>
            <person name="Dubois E."/>
            <person name="Dujon B."/>
            <person name="El Bakkoury M."/>
            <person name="Entian K.-D."/>
            <person name="Feuermann M."/>
            <person name="Fiers W."/>
            <person name="Fobo G.M."/>
            <person name="Fritz C."/>
            <person name="Gassenhuber J."/>
            <person name="Glansdorff N."/>
            <person name="Goffeau A."/>
            <person name="Grivell L.A."/>
            <person name="de Haan M."/>
            <person name="Hein C."/>
            <person name="Herbert C.J."/>
            <person name="Hollenberg C.P."/>
            <person name="Holmstroem K."/>
            <person name="Jacq C."/>
            <person name="Jacquet M."/>
            <person name="Jauniaux J.-C."/>
            <person name="Jonniaux J.-L."/>
            <person name="Kallesoee T."/>
            <person name="Kiesau P."/>
            <person name="Kirchrath L."/>
            <person name="Koetter P."/>
            <person name="Korol S."/>
            <person name="Liebl S."/>
            <person name="Logghe M."/>
            <person name="Lohan A.J.E."/>
            <person name="Louis E.J."/>
            <person name="Li Z.Y."/>
            <person name="Maat M.J."/>
            <person name="Mallet L."/>
            <person name="Mannhaupt G."/>
            <person name="Messenguy F."/>
            <person name="Miosga T."/>
            <person name="Molemans F."/>
            <person name="Mueller S."/>
            <person name="Nasr F."/>
            <person name="Obermaier B."/>
            <person name="Perea J."/>
            <person name="Pierard A."/>
            <person name="Piravandi E."/>
            <person name="Pohl F.M."/>
            <person name="Pohl T.M."/>
            <person name="Potier S."/>
            <person name="Proft M."/>
            <person name="Purnelle B."/>
            <person name="Ramezani Rad M."/>
            <person name="Rieger M."/>
            <person name="Rose M."/>
            <person name="Schaaff-Gerstenschlaeger I."/>
            <person name="Scherens B."/>
            <person name="Schwarzlose C."/>
            <person name="Skala J."/>
            <person name="Slonimski P.P."/>
            <person name="Smits P.H.M."/>
            <person name="Souciet J.-L."/>
            <person name="Steensma H.Y."/>
            <person name="Stucka R."/>
            <person name="Urrestarazu L.A."/>
            <person name="van der Aart Q.J.M."/>
            <person name="Van Dyck L."/>
            <person name="Vassarotti A."/>
            <person name="Vetter I."/>
            <person name="Vierendeels F."/>
            <person name="Vissers S."/>
            <person name="Wagner G."/>
            <person name="de Wergifosse P."/>
            <person name="Wolfe K.H."/>
            <person name="Zagulski M."/>
            <person name="Zimmermann F.K."/>
            <person name="Mewes H.-W."/>
            <person name="Kleine K."/>
        </authorList>
    </citation>
    <scope>NUCLEOTIDE SEQUENCE [LARGE SCALE GENOMIC DNA]</scope>
    <source>
        <strain>ATCC 204508 / S288c</strain>
    </source>
</reference>
<reference key="2">
    <citation type="journal article" date="2014" name="G3 (Bethesda)">
        <title>The reference genome sequence of Saccharomyces cerevisiae: Then and now.</title>
        <authorList>
            <person name="Engel S.R."/>
            <person name="Dietrich F.S."/>
            <person name="Fisk D.G."/>
            <person name="Binkley G."/>
            <person name="Balakrishnan R."/>
            <person name="Costanzo M.C."/>
            <person name="Dwight S.S."/>
            <person name="Hitz B.C."/>
            <person name="Karra K."/>
            <person name="Nash R.S."/>
            <person name="Weng S."/>
            <person name="Wong E.D."/>
            <person name="Lloyd P."/>
            <person name="Skrzypek M.S."/>
            <person name="Miyasato S.R."/>
            <person name="Simison M."/>
            <person name="Cherry J.M."/>
        </authorList>
    </citation>
    <scope>GENOME REANNOTATION</scope>
    <source>
        <strain>ATCC 204508 / S288c</strain>
    </source>
</reference>
<reference key="3">
    <citation type="journal article" date="2002" name="Eukaryot. Cell">
        <title>Dtrlp, a multidrug resistance transporter of the major facilitator superfamily, plays an essential role in spore wall maturation in Saccharomyces cerevisiae.</title>
        <authorList>
            <person name="Felder T."/>
            <person name="Bogengruber E."/>
            <person name="Tenreiro S."/>
            <person name="Ellinger A."/>
            <person name="Sa-Correia I."/>
            <person name="Briza P."/>
        </authorList>
    </citation>
    <scope>INDUCTION</scope>
    <scope>FUNCTION</scope>
    <scope>SUBCELLULAR LOCATION</scope>
</reference>
<reference key="4">
    <citation type="journal article" date="2005" name="Eukaryot. Cell">
        <title>Saccharomyces cerevisiae Sps1p regulates trafficking of enzymes required for spore wall synthesis.</title>
        <authorList>
            <person name="Iwamoto M.A."/>
            <person name="Fairclough S.R."/>
            <person name="Rudge S.A."/>
            <person name="Engebrecht J."/>
        </authorList>
    </citation>
    <scope>SUBCELLULAR LOCATION</scope>
</reference>
<reference key="5">
    <citation type="journal article" date="2006" name="J. Cell Sci.">
        <title>Phospholipase D and the SNARE Sso1p are necessary for vesicle fusion during sporulation in yeast.</title>
        <authorList>
            <person name="Nakanishi H."/>
            <person name="Morishita M."/>
            <person name="Schwartz C.L."/>
            <person name="Coluccio A."/>
            <person name="Engebrecht J."/>
            <person name="Neiman A.M."/>
        </authorList>
    </citation>
    <scope>SUBCELLULAR LOCATION</scope>
</reference>
<reference key="6">
    <citation type="journal article" date="2006" name="Proc. Natl. Acad. Sci. U.S.A.">
        <title>A global topology map of the Saccharomyces cerevisiae membrane proteome.</title>
        <authorList>
            <person name="Kim H."/>
            <person name="Melen K."/>
            <person name="Oesterberg M."/>
            <person name="von Heijne G."/>
        </authorList>
    </citation>
    <scope>TOPOLOGY [LARGE SCALE ANALYSIS]</scope>
    <source>
        <strain>ATCC 208353 / W303-1A</strain>
    </source>
</reference>
<reference key="7">
    <citation type="journal article" date="2007" name="Traffic">
        <title>Snc1p v-SNARE transport to the prospore membrane during yeast sporulation is dependent on endosomal retrieval pathways.</title>
        <authorList>
            <person name="Morishita M."/>
            <person name="Mendonsa R."/>
            <person name="Wright J."/>
            <person name="Engebrecht J."/>
        </authorList>
    </citation>
    <scope>SUBCELLULAR LOCATION</scope>
</reference>
<reference key="8">
    <citation type="journal article" date="2008" name="Eukaryot. Cell">
        <title>Sorting signals within the Saccharomyces cerevisiae sporulation-specific dityrosine transporter, Dtr1p, C terminus promote Golgi-to-prospore membrane transport.</title>
        <authorList>
            <person name="Morishita M."/>
            <person name="Engebrecht J."/>
        </authorList>
    </citation>
    <scope>SUBCELLULAR LOCATION</scope>
    <scope>PHOSPHORYLATION</scope>
</reference>